<gene>
    <name evidence="1" type="primary">rplN</name>
    <name type="ordered locus">Rpic_3287</name>
</gene>
<proteinExistence type="inferred from homology"/>
<evidence type="ECO:0000255" key="1">
    <source>
        <dbReference type="HAMAP-Rule" id="MF_01367"/>
    </source>
</evidence>
<evidence type="ECO:0000305" key="2"/>
<keyword id="KW-0687">Ribonucleoprotein</keyword>
<keyword id="KW-0689">Ribosomal protein</keyword>
<keyword id="KW-0694">RNA-binding</keyword>
<keyword id="KW-0699">rRNA-binding</keyword>
<reference key="1">
    <citation type="submission" date="2008-05" db="EMBL/GenBank/DDBJ databases">
        <title>Complete sequence of chromosome 1 of Ralstonia pickettii 12J.</title>
        <authorList>
            <person name="Lucas S."/>
            <person name="Copeland A."/>
            <person name="Lapidus A."/>
            <person name="Glavina del Rio T."/>
            <person name="Dalin E."/>
            <person name="Tice H."/>
            <person name="Bruce D."/>
            <person name="Goodwin L."/>
            <person name="Pitluck S."/>
            <person name="Meincke L."/>
            <person name="Brettin T."/>
            <person name="Detter J.C."/>
            <person name="Han C."/>
            <person name="Kuske C.R."/>
            <person name="Schmutz J."/>
            <person name="Larimer F."/>
            <person name="Land M."/>
            <person name="Hauser L."/>
            <person name="Kyrpides N."/>
            <person name="Mikhailova N."/>
            <person name="Marsh T."/>
            <person name="Richardson P."/>
        </authorList>
    </citation>
    <scope>NUCLEOTIDE SEQUENCE [LARGE SCALE GENOMIC DNA]</scope>
    <source>
        <strain>12J</strain>
    </source>
</reference>
<organism>
    <name type="scientific">Ralstonia pickettii (strain 12J)</name>
    <dbReference type="NCBI Taxonomy" id="402626"/>
    <lineage>
        <taxon>Bacteria</taxon>
        <taxon>Pseudomonadati</taxon>
        <taxon>Pseudomonadota</taxon>
        <taxon>Betaproteobacteria</taxon>
        <taxon>Burkholderiales</taxon>
        <taxon>Burkholderiaceae</taxon>
        <taxon>Ralstonia</taxon>
    </lineage>
</organism>
<sequence>MIQTESRLEVADNTGAREVMCIKVLGGSKRRYASVGDIIKVSVKDAAPRGRVKKGDIYNAVVVRTAKGVRRPDGSLIKFDGNAAVLLNTKLEPIGTRIFGPVTRELRTERFMKIVSLAPEVL</sequence>
<comment type="function">
    <text evidence="1">Binds to 23S rRNA. Forms part of two intersubunit bridges in the 70S ribosome.</text>
</comment>
<comment type="subunit">
    <text evidence="1">Part of the 50S ribosomal subunit. Forms a cluster with proteins L3 and L19. In the 70S ribosome, L14 and L19 interact and together make contacts with the 16S rRNA in bridges B5 and B8.</text>
</comment>
<comment type="similarity">
    <text evidence="1">Belongs to the universal ribosomal protein uL14 family.</text>
</comment>
<protein>
    <recommendedName>
        <fullName evidence="1">Large ribosomal subunit protein uL14</fullName>
    </recommendedName>
    <alternativeName>
        <fullName evidence="2">50S ribosomal protein L14</fullName>
    </alternativeName>
</protein>
<accession>B2UEK9</accession>
<feature type="chain" id="PRO_1000144316" description="Large ribosomal subunit protein uL14">
    <location>
        <begin position="1"/>
        <end position="122"/>
    </location>
</feature>
<name>RL14_RALPJ</name>
<dbReference type="EMBL" id="CP001068">
    <property type="protein sequence ID" value="ACD28409.1"/>
    <property type="molecule type" value="Genomic_DNA"/>
</dbReference>
<dbReference type="SMR" id="B2UEK9"/>
<dbReference type="STRING" id="402626.Rpic_3287"/>
<dbReference type="KEGG" id="rpi:Rpic_3287"/>
<dbReference type="eggNOG" id="COG0093">
    <property type="taxonomic scope" value="Bacteria"/>
</dbReference>
<dbReference type="HOGENOM" id="CLU_095071_2_1_4"/>
<dbReference type="GO" id="GO:0022625">
    <property type="term" value="C:cytosolic large ribosomal subunit"/>
    <property type="evidence" value="ECO:0007669"/>
    <property type="project" value="TreeGrafter"/>
</dbReference>
<dbReference type="GO" id="GO:0070180">
    <property type="term" value="F:large ribosomal subunit rRNA binding"/>
    <property type="evidence" value="ECO:0007669"/>
    <property type="project" value="TreeGrafter"/>
</dbReference>
<dbReference type="GO" id="GO:0003735">
    <property type="term" value="F:structural constituent of ribosome"/>
    <property type="evidence" value="ECO:0007669"/>
    <property type="project" value="InterPro"/>
</dbReference>
<dbReference type="GO" id="GO:0006412">
    <property type="term" value="P:translation"/>
    <property type="evidence" value="ECO:0007669"/>
    <property type="project" value="UniProtKB-UniRule"/>
</dbReference>
<dbReference type="CDD" id="cd00337">
    <property type="entry name" value="Ribosomal_uL14"/>
    <property type="match status" value="1"/>
</dbReference>
<dbReference type="FunFam" id="2.40.150.20:FF:000001">
    <property type="entry name" value="50S ribosomal protein L14"/>
    <property type="match status" value="1"/>
</dbReference>
<dbReference type="Gene3D" id="2.40.150.20">
    <property type="entry name" value="Ribosomal protein L14"/>
    <property type="match status" value="1"/>
</dbReference>
<dbReference type="HAMAP" id="MF_01367">
    <property type="entry name" value="Ribosomal_uL14"/>
    <property type="match status" value="1"/>
</dbReference>
<dbReference type="InterPro" id="IPR000218">
    <property type="entry name" value="Ribosomal_uL14"/>
</dbReference>
<dbReference type="InterPro" id="IPR005745">
    <property type="entry name" value="Ribosomal_uL14_bac-type"/>
</dbReference>
<dbReference type="InterPro" id="IPR019972">
    <property type="entry name" value="Ribosomal_uL14_CS"/>
</dbReference>
<dbReference type="InterPro" id="IPR036853">
    <property type="entry name" value="Ribosomal_uL14_sf"/>
</dbReference>
<dbReference type="NCBIfam" id="TIGR01067">
    <property type="entry name" value="rplN_bact"/>
    <property type="match status" value="1"/>
</dbReference>
<dbReference type="PANTHER" id="PTHR11761">
    <property type="entry name" value="50S/60S RIBOSOMAL PROTEIN L14/L23"/>
    <property type="match status" value="1"/>
</dbReference>
<dbReference type="PANTHER" id="PTHR11761:SF3">
    <property type="entry name" value="LARGE RIBOSOMAL SUBUNIT PROTEIN UL14M"/>
    <property type="match status" value="1"/>
</dbReference>
<dbReference type="Pfam" id="PF00238">
    <property type="entry name" value="Ribosomal_L14"/>
    <property type="match status" value="1"/>
</dbReference>
<dbReference type="SMART" id="SM01374">
    <property type="entry name" value="Ribosomal_L14"/>
    <property type="match status" value="1"/>
</dbReference>
<dbReference type="SUPFAM" id="SSF50193">
    <property type="entry name" value="Ribosomal protein L14"/>
    <property type="match status" value="1"/>
</dbReference>
<dbReference type="PROSITE" id="PS00049">
    <property type="entry name" value="RIBOSOMAL_L14"/>
    <property type="match status" value="1"/>
</dbReference>